<accession>C1C7R8</accession>
<protein>
    <recommendedName>
        <fullName evidence="1">UPF0122 protein SP70585_1353</fullName>
    </recommendedName>
</protein>
<evidence type="ECO:0000255" key="1">
    <source>
        <dbReference type="HAMAP-Rule" id="MF_00245"/>
    </source>
</evidence>
<sequence length="110" mass="13348">MEIEKTNRMNALFEFYAALLTDKQMNYIELYYADDYSLAEIAEEFGVSRQAVYDNIKRTEKILEDYEMKLHMYSDYIVRSQIFDQILERYPKDDFLQEQIEILTSIDNRE</sequence>
<name>Y1353_STRP7</name>
<dbReference type="EMBL" id="CP000918">
    <property type="protein sequence ID" value="ACO17488.1"/>
    <property type="molecule type" value="Genomic_DNA"/>
</dbReference>
<dbReference type="RefSeq" id="WP_000402066.1">
    <property type="nucleotide sequence ID" value="NC_012468.1"/>
</dbReference>
<dbReference type="SMR" id="C1C7R8"/>
<dbReference type="KEGG" id="snm:SP70585_1353"/>
<dbReference type="HOGENOM" id="CLU_129218_1_0_9"/>
<dbReference type="Proteomes" id="UP000002211">
    <property type="component" value="Chromosome"/>
</dbReference>
<dbReference type="Gene3D" id="1.10.10.10">
    <property type="entry name" value="Winged helix-like DNA-binding domain superfamily/Winged helix DNA-binding domain"/>
    <property type="match status" value="1"/>
</dbReference>
<dbReference type="HAMAP" id="MF_00245">
    <property type="entry name" value="UPF0122"/>
    <property type="match status" value="1"/>
</dbReference>
<dbReference type="InterPro" id="IPR013324">
    <property type="entry name" value="RNA_pol_sigma_r3/r4-like"/>
</dbReference>
<dbReference type="InterPro" id="IPR007394">
    <property type="entry name" value="UPF0122"/>
</dbReference>
<dbReference type="InterPro" id="IPR054831">
    <property type="entry name" value="UPF0122_fam_protein"/>
</dbReference>
<dbReference type="InterPro" id="IPR036388">
    <property type="entry name" value="WH-like_DNA-bd_sf"/>
</dbReference>
<dbReference type="NCBIfam" id="NF001066">
    <property type="entry name" value="PRK00118.1-1"/>
    <property type="match status" value="1"/>
</dbReference>
<dbReference type="NCBIfam" id="NF001068">
    <property type="entry name" value="PRK00118.1-4"/>
    <property type="match status" value="1"/>
</dbReference>
<dbReference type="NCBIfam" id="NF001070">
    <property type="entry name" value="PRK00118.1-6"/>
    <property type="match status" value="1"/>
</dbReference>
<dbReference type="NCBIfam" id="NF045758">
    <property type="entry name" value="YlxM"/>
    <property type="match status" value="1"/>
</dbReference>
<dbReference type="PANTHER" id="PTHR40083">
    <property type="entry name" value="UPF0122 PROTEIN CBO2450/CLC_2298"/>
    <property type="match status" value="1"/>
</dbReference>
<dbReference type="PANTHER" id="PTHR40083:SF1">
    <property type="entry name" value="UPF0122 PROTEIN YLXM"/>
    <property type="match status" value="1"/>
</dbReference>
<dbReference type="Pfam" id="PF04297">
    <property type="entry name" value="UPF0122"/>
    <property type="match status" value="1"/>
</dbReference>
<dbReference type="SUPFAM" id="SSF88659">
    <property type="entry name" value="Sigma3 and sigma4 domains of RNA polymerase sigma factors"/>
    <property type="match status" value="1"/>
</dbReference>
<organism>
    <name type="scientific">Streptococcus pneumoniae (strain 70585)</name>
    <dbReference type="NCBI Taxonomy" id="488221"/>
    <lineage>
        <taxon>Bacteria</taxon>
        <taxon>Bacillati</taxon>
        <taxon>Bacillota</taxon>
        <taxon>Bacilli</taxon>
        <taxon>Lactobacillales</taxon>
        <taxon>Streptococcaceae</taxon>
        <taxon>Streptococcus</taxon>
    </lineage>
</organism>
<comment type="function">
    <text evidence="1">Might take part in the signal recognition particle (SRP) pathway. This is inferred from the conservation of its genetic proximity to ftsY/ffh. May be a regulatory protein.</text>
</comment>
<comment type="similarity">
    <text evidence="1">Belongs to the UPF0122 family.</text>
</comment>
<gene>
    <name type="ordered locus">SP70585_1353</name>
</gene>
<feature type="chain" id="PRO_1000197593" description="UPF0122 protein SP70585_1353">
    <location>
        <begin position="1"/>
        <end position="110"/>
    </location>
</feature>
<proteinExistence type="inferred from homology"/>
<reference key="1">
    <citation type="journal article" date="2010" name="Genome Biol.">
        <title>Structure and dynamics of the pan-genome of Streptococcus pneumoniae and closely related species.</title>
        <authorList>
            <person name="Donati C."/>
            <person name="Hiller N.L."/>
            <person name="Tettelin H."/>
            <person name="Muzzi A."/>
            <person name="Croucher N.J."/>
            <person name="Angiuoli S.V."/>
            <person name="Oggioni M."/>
            <person name="Dunning Hotopp J.C."/>
            <person name="Hu F.Z."/>
            <person name="Riley D.R."/>
            <person name="Covacci A."/>
            <person name="Mitchell T.J."/>
            <person name="Bentley S.D."/>
            <person name="Kilian M."/>
            <person name="Ehrlich G.D."/>
            <person name="Rappuoli R."/>
            <person name="Moxon E.R."/>
            <person name="Masignani V."/>
        </authorList>
    </citation>
    <scope>NUCLEOTIDE SEQUENCE [LARGE SCALE GENOMIC DNA]</scope>
    <source>
        <strain>70585</strain>
    </source>
</reference>